<keyword id="KW-0030">Aminoacyl-tRNA synthetase</keyword>
<keyword id="KW-0067">ATP-binding</keyword>
<keyword id="KW-0963">Cytoplasm</keyword>
<keyword id="KW-0436">Ligase</keyword>
<keyword id="KW-0547">Nucleotide-binding</keyword>
<keyword id="KW-0648">Protein biosynthesis</keyword>
<keyword id="KW-1185">Reference proteome</keyword>
<organism>
    <name type="scientific">Thermoanaerobacter pseudethanolicus (strain ATCC 33223 / 39E)</name>
    <name type="common">Clostridium thermohydrosulfuricum</name>
    <dbReference type="NCBI Taxonomy" id="340099"/>
    <lineage>
        <taxon>Bacteria</taxon>
        <taxon>Bacillati</taxon>
        <taxon>Bacillota</taxon>
        <taxon>Clostridia</taxon>
        <taxon>Thermoanaerobacterales</taxon>
        <taxon>Thermoanaerobacteraceae</taxon>
        <taxon>Thermoanaerobacter</taxon>
    </lineage>
</organism>
<gene>
    <name evidence="1" type="primary">gltX2</name>
    <name type="ordered locus">Teth39_1419</name>
</gene>
<protein>
    <recommendedName>
        <fullName evidence="1">Glutamate--tRNA ligase 2</fullName>
        <ecNumber evidence="1">6.1.1.17</ecNumber>
    </recommendedName>
    <alternativeName>
        <fullName evidence="1">Glutamyl-tRNA synthetase 2</fullName>
        <shortName evidence="1">GluRS 2</shortName>
    </alternativeName>
</protein>
<name>SYE2_THEP3</name>
<evidence type="ECO:0000255" key="1">
    <source>
        <dbReference type="HAMAP-Rule" id="MF_00022"/>
    </source>
</evidence>
<reference key="1">
    <citation type="submission" date="2008-01" db="EMBL/GenBank/DDBJ databases">
        <title>Complete sequence of Thermoanaerobacter pseudethanolicus 39E.</title>
        <authorList>
            <person name="Copeland A."/>
            <person name="Lucas S."/>
            <person name="Lapidus A."/>
            <person name="Barry K."/>
            <person name="Glavina del Rio T."/>
            <person name="Dalin E."/>
            <person name="Tice H."/>
            <person name="Pitluck S."/>
            <person name="Bruce D."/>
            <person name="Goodwin L."/>
            <person name="Saunders E."/>
            <person name="Brettin T."/>
            <person name="Detter J.C."/>
            <person name="Han C."/>
            <person name="Schmutz J."/>
            <person name="Larimer F."/>
            <person name="Land M."/>
            <person name="Hauser L."/>
            <person name="Kyrpides N."/>
            <person name="Lykidis A."/>
            <person name="Hemme C."/>
            <person name="Fields M.W."/>
            <person name="He Z."/>
            <person name="Zhou J."/>
            <person name="Richardson P."/>
        </authorList>
    </citation>
    <scope>NUCLEOTIDE SEQUENCE [LARGE SCALE GENOMIC DNA]</scope>
    <source>
        <strain>ATCC 33223 / DSM 2355 / 39E</strain>
    </source>
</reference>
<comment type="function">
    <text evidence="1">Catalyzes the attachment of glutamate to tRNA(Glu) in a two-step reaction: glutamate is first activated by ATP to form Glu-AMP and then transferred to the acceptor end of tRNA(Glu).</text>
</comment>
<comment type="catalytic activity">
    <reaction evidence="1">
        <text>tRNA(Glu) + L-glutamate + ATP = L-glutamyl-tRNA(Glu) + AMP + diphosphate</text>
        <dbReference type="Rhea" id="RHEA:23540"/>
        <dbReference type="Rhea" id="RHEA-COMP:9663"/>
        <dbReference type="Rhea" id="RHEA-COMP:9680"/>
        <dbReference type="ChEBI" id="CHEBI:29985"/>
        <dbReference type="ChEBI" id="CHEBI:30616"/>
        <dbReference type="ChEBI" id="CHEBI:33019"/>
        <dbReference type="ChEBI" id="CHEBI:78442"/>
        <dbReference type="ChEBI" id="CHEBI:78520"/>
        <dbReference type="ChEBI" id="CHEBI:456215"/>
        <dbReference type="EC" id="6.1.1.17"/>
    </reaction>
</comment>
<comment type="subunit">
    <text evidence="1">Monomer.</text>
</comment>
<comment type="subcellular location">
    <subcellularLocation>
        <location evidence="1">Cytoplasm</location>
    </subcellularLocation>
</comment>
<comment type="similarity">
    <text evidence="1">Belongs to the class-I aminoacyl-tRNA synthetase family. Glutamate--tRNA ligase type 1 subfamily.</text>
</comment>
<feature type="chain" id="PRO_0000367782" description="Glutamate--tRNA ligase 2">
    <location>
        <begin position="1"/>
        <end position="479"/>
    </location>
</feature>
<feature type="short sequence motif" description="'HIGH' region" evidence="1">
    <location>
        <begin position="10"/>
        <end position="20"/>
    </location>
</feature>
<feature type="short sequence motif" description="'KMSKS' region" evidence="1">
    <location>
        <begin position="243"/>
        <end position="247"/>
    </location>
</feature>
<feature type="binding site" evidence="1">
    <location>
        <position position="246"/>
    </location>
    <ligand>
        <name>ATP</name>
        <dbReference type="ChEBI" id="CHEBI:30616"/>
    </ligand>
</feature>
<accession>B0KAA6</accession>
<sequence>MSEVRVRFAPSPTGSLHIGGARTALFNWLFARHNGGKFILRVDDTDLQRSTEESMKGILEGLKWLGIDWDEGPIYQSQRLEEYRKFANKLLKEGKAYYCFCTKEELEEMRKQAEKEGRPPMYTGKCRNLTKEQIEEYLRQGKKPVIRLKVPQQGKTVVHDIIRGDVEFDNSTFDDFIIMKSDNMPTYNFATVVDDYQMGITHVIRAEEHLSNTPKQILIFEALGLEIPQFAHVSMVLAPDRSKLSKRHGATSVQEFRDQGYLPEAIVNYITLLGWIPKDGEEIFDVSKSKKEFTLERVSKNPAIYDVQKLTWINGHYIRNYDLDKLTEVVIPFLKAKNFIGEDFDYDYIKKIVSVVREREKTLVDVADAMSYYFTEVYEYEEKGVKKYFTKEKVVDILKKAVVTLKEVEPFNKFTTEEAYRKLVEELQISSGELFHPTRLAISGRTFGPGLFDIMELLGKERTIERIEKAIDFIQKMRK</sequence>
<proteinExistence type="inferred from homology"/>
<dbReference type="EC" id="6.1.1.17" evidence="1"/>
<dbReference type="EMBL" id="CP000924">
    <property type="protein sequence ID" value="ABY95069.1"/>
    <property type="molecule type" value="Genomic_DNA"/>
</dbReference>
<dbReference type="SMR" id="B0KAA6"/>
<dbReference type="STRING" id="340099.Teth39_1419"/>
<dbReference type="KEGG" id="tpd:Teth39_1419"/>
<dbReference type="eggNOG" id="COG0008">
    <property type="taxonomic scope" value="Bacteria"/>
</dbReference>
<dbReference type="HOGENOM" id="CLU_015768_6_3_9"/>
<dbReference type="Proteomes" id="UP000002156">
    <property type="component" value="Chromosome"/>
</dbReference>
<dbReference type="GO" id="GO:0005829">
    <property type="term" value="C:cytosol"/>
    <property type="evidence" value="ECO:0007669"/>
    <property type="project" value="TreeGrafter"/>
</dbReference>
<dbReference type="GO" id="GO:0005524">
    <property type="term" value="F:ATP binding"/>
    <property type="evidence" value="ECO:0007669"/>
    <property type="project" value="UniProtKB-UniRule"/>
</dbReference>
<dbReference type="GO" id="GO:0004818">
    <property type="term" value="F:glutamate-tRNA ligase activity"/>
    <property type="evidence" value="ECO:0007669"/>
    <property type="project" value="UniProtKB-UniRule"/>
</dbReference>
<dbReference type="GO" id="GO:0000049">
    <property type="term" value="F:tRNA binding"/>
    <property type="evidence" value="ECO:0007669"/>
    <property type="project" value="InterPro"/>
</dbReference>
<dbReference type="GO" id="GO:0008270">
    <property type="term" value="F:zinc ion binding"/>
    <property type="evidence" value="ECO:0007669"/>
    <property type="project" value="InterPro"/>
</dbReference>
<dbReference type="GO" id="GO:0006424">
    <property type="term" value="P:glutamyl-tRNA aminoacylation"/>
    <property type="evidence" value="ECO:0007669"/>
    <property type="project" value="UniProtKB-UniRule"/>
</dbReference>
<dbReference type="CDD" id="cd00808">
    <property type="entry name" value="GluRS_core"/>
    <property type="match status" value="1"/>
</dbReference>
<dbReference type="FunFam" id="3.40.50.620:FF:000007">
    <property type="entry name" value="Glutamate--tRNA ligase"/>
    <property type="match status" value="1"/>
</dbReference>
<dbReference type="Gene3D" id="1.10.10.350">
    <property type="match status" value="1"/>
</dbReference>
<dbReference type="Gene3D" id="1.10.8.70">
    <property type="entry name" value="Glutamate-tRNA synthetase, class I, anticodon-binding domain 1"/>
    <property type="match status" value="1"/>
</dbReference>
<dbReference type="Gene3D" id="3.40.50.620">
    <property type="entry name" value="HUPs"/>
    <property type="match status" value="1"/>
</dbReference>
<dbReference type="HAMAP" id="MF_00022">
    <property type="entry name" value="Glu_tRNA_synth_type1"/>
    <property type="match status" value="1"/>
</dbReference>
<dbReference type="InterPro" id="IPR045462">
    <property type="entry name" value="aa-tRNA-synth_I_cd-bd"/>
</dbReference>
<dbReference type="InterPro" id="IPR020751">
    <property type="entry name" value="aa-tRNA-synth_I_codon-bd_sub2"/>
</dbReference>
<dbReference type="InterPro" id="IPR001412">
    <property type="entry name" value="aa-tRNA-synth_I_CS"/>
</dbReference>
<dbReference type="InterPro" id="IPR008925">
    <property type="entry name" value="aa_tRNA-synth_I_cd-bd_sf"/>
</dbReference>
<dbReference type="InterPro" id="IPR004527">
    <property type="entry name" value="Glu-tRNA-ligase_bac/mito"/>
</dbReference>
<dbReference type="InterPro" id="IPR020752">
    <property type="entry name" value="Glu-tRNA-synth_I_codon-bd_sub1"/>
</dbReference>
<dbReference type="InterPro" id="IPR000924">
    <property type="entry name" value="Glu/Gln-tRNA-synth"/>
</dbReference>
<dbReference type="InterPro" id="IPR020058">
    <property type="entry name" value="Glu/Gln-tRNA-synth_Ib_cat-dom"/>
</dbReference>
<dbReference type="InterPro" id="IPR049940">
    <property type="entry name" value="GluQ/Sye"/>
</dbReference>
<dbReference type="InterPro" id="IPR033910">
    <property type="entry name" value="GluRS_core"/>
</dbReference>
<dbReference type="InterPro" id="IPR014729">
    <property type="entry name" value="Rossmann-like_a/b/a_fold"/>
</dbReference>
<dbReference type="NCBIfam" id="TIGR00464">
    <property type="entry name" value="gltX_bact"/>
    <property type="match status" value="1"/>
</dbReference>
<dbReference type="NCBIfam" id="NF004315">
    <property type="entry name" value="PRK05710.1-4"/>
    <property type="match status" value="1"/>
</dbReference>
<dbReference type="PANTHER" id="PTHR43311">
    <property type="entry name" value="GLUTAMATE--TRNA LIGASE"/>
    <property type="match status" value="1"/>
</dbReference>
<dbReference type="PANTHER" id="PTHR43311:SF2">
    <property type="entry name" value="GLUTAMATE--TRNA LIGASE, MITOCHONDRIAL-RELATED"/>
    <property type="match status" value="1"/>
</dbReference>
<dbReference type="Pfam" id="PF19269">
    <property type="entry name" value="Anticodon_2"/>
    <property type="match status" value="1"/>
</dbReference>
<dbReference type="Pfam" id="PF00749">
    <property type="entry name" value="tRNA-synt_1c"/>
    <property type="match status" value="1"/>
</dbReference>
<dbReference type="PRINTS" id="PR00987">
    <property type="entry name" value="TRNASYNTHGLU"/>
</dbReference>
<dbReference type="SUPFAM" id="SSF48163">
    <property type="entry name" value="An anticodon-binding domain of class I aminoacyl-tRNA synthetases"/>
    <property type="match status" value="1"/>
</dbReference>
<dbReference type="SUPFAM" id="SSF52374">
    <property type="entry name" value="Nucleotidylyl transferase"/>
    <property type="match status" value="1"/>
</dbReference>
<dbReference type="PROSITE" id="PS00178">
    <property type="entry name" value="AA_TRNA_LIGASE_I"/>
    <property type="match status" value="1"/>
</dbReference>